<feature type="chain" id="PRO_0000046760" description="Mitochondrial import receptor subunit TOM7 homolog">
    <location>
        <begin position="1"/>
        <end position="55"/>
    </location>
</feature>
<feature type="topological domain" description="Cytoplasmic" evidence="1">
    <location>
        <begin position="1"/>
        <end position="20"/>
    </location>
</feature>
<feature type="transmembrane region" description="Helical" evidence="3">
    <location>
        <begin position="21"/>
        <end position="40"/>
    </location>
</feature>
<feature type="topological domain" description="Mitochondrial intermembrane" evidence="1">
    <location>
        <begin position="41"/>
        <end position="55"/>
    </location>
</feature>
<feature type="mutagenesis site" description="Homozygous mice develop a rapidly progressing emaciation after 7-8 weeks of life, leading to sudden death at around 9 to 10 weeks of age. There is lipid accumulation in the liver. Tibial growth plates of mutant mice show a shortening of the growth plate." evidence="4">
    <original>W</original>
    <variation>R</variation>
    <location>
        <position position="25"/>
    </location>
</feature>
<accession>Q9D173</accession>
<comment type="function">
    <text evidence="2">Required for assembly and stability of the TOM complex (By similarity). Positive regulator of PRKN translocation to damaged mitochondria. Acts probably by stabilizing PINK1 on the outer membrane of depolarized mitochondria (By similarity).</text>
</comment>
<comment type="subunit">
    <text evidence="2">Forms part of the preprotein translocase complex of the outer mitochondrial membrane (TOM complex) which consists of at least 7 different proteins (TOMM5, TOMM6, TOMM7, TOMM20, TOMM22, TOMM40 and TOMM70).</text>
</comment>
<comment type="subcellular location">
    <subcellularLocation>
        <location evidence="2">Mitochondrion outer membrane</location>
        <topology evidence="2">Single-pass membrane protein</topology>
    </subcellularLocation>
</comment>
<comment type="similarity">
    <text evidence="5">Belongs to the Tom7 family.</text>
</comment>
<proteinExistence type="evidence at protein level"/>
<protein>
    <recommendedName>
        <fullName>Mitochondrial import receptor subunit TOM7 homolog</fullName>
    </recommendedName>
    <alternativeName>
        <fullName>Translocase of outer membrane 7 kDa subunit homolog</fullName>
    </alternativeName>
</protein>
<sequence>MVKLSKEAKQRLQQLFKGGQFAIRWGFIPLVIYLGFTRGADPGMPEPSVLSLLWG</sequence>
<gene>
    <name type="primary">Tomm7</name>
</gene>
<dbReference type="EMBL" id="AK003864">
    <property type="protein sequence ID" value="BAB23046.1"/>
    <property type="molecule type" value="mRNA"/>
</dbReference>
<dbReference type="EMBL" id="BC055352">
    <property type="protein sequence ID" value="AAH55352.1"/>
    <property type="molecule type" value="mRNA"/>
</dbReference>
<dbReference type="CCDS" id="CCDS39026.1"/>
<dbReference type="RefSeq" id="NP_079670.1">
    <property type="nucleotide sequence ID" value="NM_025394.3"/>
</dbReference>
<dbReference type="SMR" id="Q9D173"/>
<dbReference type="BioGRID" id="211267">
    <property type="interactions" value="3"/>
</dbReference>
<dbReference type="FunCoup" id="Q9D173">
    <property type="interactions" value="769"/>
</dbReference>
<dbReference type="STRING" id="10090.ENSMUSP00000030851"/>
<dbReference type="iPTMnet" id="Q9D173"/>
<dbReference type="PhosphoSitePlus" id="Q9D173"/>
<dbReference type="jPOST" id="Q9D173"/>
<dbReference type="PaxDb" id="10090-ENSMUSP00000030851"/>
<dbReference type="PeptideAtlas" id="Q9D173"/>
<dbReference type="ProteomicsDB" id="258950"/>
<dbReference type="Pumba" id="Q9D173"/>
<dbReference type="TopDownProteomics" id="Q9D173"/>
<dbReference type="Antibodypedia" id="53355">
    <property type="antibodies" value="28 antibodies from 11 providers"/>
</dbReference>
<dbReference type="Ensembl" id="ENSMUST00000030851.7">
    <property type="protein sequence ID" value="ENSMUSP00000030851.7"/>
    <property type="gene ID" value="ENSMUSG00000028998.7"/>
</dbReference>
<dbReference type="GeneID" id="66169"/>
<dbReference type="KEGG" id="mmu:66169"/>
<dbReference type="UCSC" id="uc008wqs.2">
    <property type="organism name" value="mouse"/>
</dbReference>
<dbReference type="AGR" id="MGI:1913419"/>
<dbReference type="CTD" id="54543"/>
<dbReference type="MGI" id="MGI:1913419">
    <property type="gene designation" value="Tomm7"/>
</dbReference>
<dbReference type="VEuPathDB" id="HostDB:ENSMUSG00000028998"/>
<dbReference type="eggNOG" id="KOG4449">
    <property type="taxonomic scope" value="Eukaryota"/>
</dbReference>
<dbReference type="GeneTree" id="ENSGT00390000014833"/>
<dbReference type="HOGENOM" id="CLU_173610_2_1_1"/>
<dbReference type="InParanoid" id="Q9D173"/>
<dbReference type="OMA" id="LMNLLWQ"/>
<dbReference type="OrthoDB" id="284357at2759"/>
<dbReference type="PhylomeDB" id="Q9D173"/>
<dbReference type="TreeFam" id="TF106199"/>
<dbReference type="Reactome" id="R-MMU-5205685">
    <property type="pathway name" value="PINK1-PRKN Mediated Mitophagy"/>
</dbReference>
<dbReference type="BioGRID-ORCS" id="66169">
    <property type="hits" value="15 hits in 73 CRISPR screens"/>
</dbReference>
<dbReference type="ChiTaRS" id="Tomm7">
    <property type="organism name" value="mouse"/>
</dbReference>
<dbReference type="PRO" id="PR:Q9D173"/>
<dbReference type="Proteomes" id="UP000000589">
    <property type="component" value="Chromosome 5"/>
</dbReference>
<dbReference type="RNAct" id="Q9D173">
    <property type="molecule type" value="protein"/>
</dbReference>
<dbReference type="Bgee" id="ENSMUSG00000028998">
    <property type="expression patterns" value="Expressed in ileal epithelium and 261 other cell types or tissues"/>
</dbReference>
<dbReference type="GO" id="GO:0005742">
    <property type="term" value="C:mitochondrial outer membrane translocase complex"/>
    <property type="evidence" value="ECO:0007669"/>
    <property type="project" value="Ensembl"/>
</dbReference>
<dbReference type="GO" id="GO:0005739">
    <property type="term" value="C:mitochondrion"/>
    <property type="evidence" value="ECO:0007005"/>
    <property type="project" value="MGI"/>
</dbReference>
<dbReference type="GO" id="GO:1903955">
    <property type="term" value="P:positive regulation of protein targeting to mitochondrion"/>
    <property type="evidence" value="ECO:0007669"/>
    <property type="project" value="Ensembl"/>
</dbReference>
<dbReference type="GO" id="GO:1905091">
    <property type="term" value="P:positive regulation of type 2 mitophagy"/>
    <property type="evidence" value="ECO:0007669"/>
    <property type="project" value="Ensembl"/>
</dbReference>
<dbReference type="GO" id="GO:0030150">
    <property type="term" value="P:protein import into mitochondrial matrix"/>
    <property type="evidence" value="ECO:0007669"/>
    <property type="project" value="InterPro"/>
</dbReference>
<dbReference type="GO" id="GO:0031647">
    <property type="term" value="P:regulation of protein stability"/>
    <property type="evidence" value="ECO:0007669"/>
    <property type="project" value="Ensembl"/>
</dbReference>
<dbReference type="InterPro" id="IPR012621">
    <property type="entry name" value="Tom7"/>
</dbReference>
<dbReference type="PANTHER" id="PTHR46722">
    <property type="entry name" value="MITOCHONDRIAL IMPORT RECEPTOR SUBUNIT TOM7 HOMOLOG"/>
    <property type="match status" value="1"/>
</dbReference>
<dbReference type="PANTHER" id="PTHR46722:SF1">
    <property type="entry name" value="MITOCHONDRIAL IMPORT RECEPTOR SUBUNIT TOM7 HOMOLOG"/>
    <property type="match status" value="1"/>
</dbReference>
<dbReference type="Pfam" id="PF08038">
    <property type="entry name" value="Tom7"/>
    <property type="match status" value="1"/>
</dbReference>
<reference key="1">
    <citation type="journal article" date="2005" name="Science">
        <title>The transcriptional landscape of the mammalian genome.</title>
        <authorList>
            <person name="Carninci P."/>
            <person name="Kasukawa T."/>
            <person name="Katayama S."/>
            <person name="Gough J."/>
            <person name="Frith M.C."/>
            <person name="Maeda N."/>
            <person name="Oyama R."/>
            <person name="Ravasi T."/>
            <person name="Lenhard B."/>
            <person name="Wells C."/>
            <person name="Kodzius R."/>
            <person name="Shimokawa K."/>
            <person name="Bajic V.B."/>
            <person name="Brenner S.E."/>
            <person name="Batalov S."/>
            <person name="Forrest A.R."/>
            <person name="Zavolan M."/>
            <person name="Davis M.J."/>
            <person name="Wilming L.G."/>
            <person name="Aidinis V."/>
            <person name="Allen J.E."/>
            <person name="Ambesi-Impiombato A."/>
            <person name="Apweiler R."/>
            <person name="Aturaliya R.N."/>
            <person name="Bailey T.L."/>
            <person name="Bansal M."/>
            <person name="Baxter L."/>
            <person name="Beisel K.W."/>
            <person name="Bersano T."/>
            <person name="Bono H."/>
            <person name="Chalk A.M."/>
            <person name="Chiu K.P."/>
            <person name="Choudhary V."/>
            <person name="Christoffels A."/>
            <person name="Clutterbuck D.R."/>
            <person name="Crowe M.L."/>
            <person name="Dalla E."/>
            <person name="Dalrymple B.P."/>
            <person name="de Bono B."/>
            <person name="Della Gatta G."/>
            <person name="di Bernardo D."/>
            <person name="Down T."/>
            <person name="Engstrom P."/>
            <person name="Fagiolini M."/>
            <person name="Faulkner G."/>
            <person name="Fletcher C.F."/>
            <person name="Fukushima T."/>
            <person name="Furuno M."/>
            <person name="Futaki S."/>
            <person name="Gariboldi M."/>
            <person name="Georgii-Hemming P."/>
            <person name="Gingeras T.R."/>
            <person name="Gojobori T."/>
            <person name="Green R.E."/>
            <person name="Gustincich S."/>
            <person name="Harbers M."/>
            <person name="Hayashi Y."/>
            <person name="Hensch T.K."/>
            <person name="Hirokawa N."/>
            <person name="Hill D."/>
            <person name="Huminiecki L."/>
            <person name="Iacono M."/>
            <person name="Ikeo K."/>
            <person name="Iwama A."/>
            <person name="Ishikawa T."/>
            <person name="Jakt M."/>
            <person name="Kanapin A."/>
            <person name="Katoh M."/>
            <person name="Kawasawa Y."/>
            <person name="Kelso J."/>
            <person name="Kitamura H."/>
            <person name="Kitano H."/>
            <person name="Kollias G."/>
            <person name="Krishnan S.P."/>
            <person name="Kruger A."/>
            <person name="Kummerfeld S.K."/>
            <person name="Kurochkin I.V."/>
            <person name="Lareau L.F."/>
            <person name="Lazarevic D."/>
            <person name="Lipovich L."/>
            <person name="Liu J."/>
            <person name="Liuni S."/>
            <person name="McWilliam S."/>
            <person name="Madan Babu M."/>
            <person name="Madera M."/>
            <person name="Marchionni L."/>
            <person name="Matsuda H."/>
            <person name="Matsuzawa S."/>
            <person name="Miki H."/>
            <person name="Mignone F."/>
            <person name="Miyake S."/>
            <person name="Morris K."/>
            <person name="Mottagui-Tabar S."/>
            <person name="Mulder N."/>
            <person name="Nakano N."/>
            <person name="Nakauchi H."/>
            <person name="Ng P."/>
            <person name="Nilsson R."/>
            <person name="Nishiguchi S."/>
            <person name="Nishikawa S."/>
            <person name="Nori F."/>
            <person name="Ohara O."/>
            <person name="Okazaki Y."/>
            <person name="Orlando V."/>
            <person name="Pang K.C."/>
            <person name="Pavan W.J."/>
            <person name="Pavesi G."/>
            <person name="Pesole G."/>
            <person name="Petrovsky N."/>
            <person name="Piazza S."/>
            <person name="Reed J."/>
            <person name="Reid J.F."/>
            <person name="Ring B.Z."/>
            <person name="Ringwald M."/>
            <person name="Rost B."/>
            <person name="Ruan Y."/>
            <person name="Salzberg S.L."/>
            <person name="Sandelin A."/>
            <person name="Schneider C."/>
            <person name="Schoenbach C."/>
            <person name="Sekiguchi K."/>
            <person name="Semple C.A."/>
            <person name="Seno S."/>
            <person name="Sessa L."/>
            <person name="Sheng Y."/>
            <person name="Shibata Y."/>
            <person name="Shimada H."/>
            <person name="Shimada K."/>
            <person name="Silva D."/>
            <person name="Sinclair B."/>
            <person name="Sperling S."/>
            <person name="Stupka E."/>
            <person name="Sugiura K."/>
            <person name="Sultana R."/>
            <person name="Takenaka Y."/>
            <person name="Taki K."/>
            <person name="Tammoja K."/>
            <person name="Tan S.L."/>
            <person name="Tang S."/>
            <person name="Taylor M.S."/>
            <person name="Tegner J."/>
            <person name="Teichmann S.A."/>
            <person name="Ueda H.R."/>
            <person name="van Nimwegen E."/>
            <person name="Verardo R."/>
            <person name="Wei C.L."/>
            <person name="Yagi K."/>
            <person name="Yamanishi H."/>
            <person name="Zabarovsky E."/>
            <person name="Zhu S."/>
            <person name="Zimmer A."/>
            <person name="Hide W."/>
            <person name="Bult C."/>
            <person name="Grimmond S.M."/>
            <person name="Teasdale R.D."/>
            <person name="Liu E.T."/>
            <person name="Brusic V."/>
            <person name="Quackenbush J."/>
            <person name="Wahlestedt C."/>
            <person name="Mattick J.S."/>
            <person name="Hume D.A."/>
            <person name="Kai C."/>
            <person name="Sasaki D."/>
            <person name="Tomaru Y."/>
            <person name="Fukuda S."/>
            <person name="Kanamori-Katayama M."/>
            <person name="Suzuki M."/>
            <person name="Aoki J."/>
            <person name="Arakawa T."/>
            <person name="Iida J."/>
            <person name="Imamura K."/>
            <person name="Itoh M."/>
            <person name="Kato T."/>
            <person name="Kawaji H."/>
            <person name="Kawagashira N."/>
            <person name="Kawashima T."/>
            <person name="Kojima M."/>
            <person name="Kondo S."/>
            <person name="Konno H."/>
            <person name="Nakano K."/>
            <person name="Ninomiya N."/>
            <person name="Nishio T."/>
            <person name="Okada M."/>
            <person name="Plessy C."/>
            <person name="Shibata K."/>
            <person name="Shiraki T."/>
            <person name="Suzuki S."/>
            <person name="Tagami M."/>
            <person name="Waki K."/>
            <person name="Watahiki A."/>
            <person name="Okamura-Oho Y."/>
            <person name="Suzuki H."/>
            <person name="Kawai J."/>
            <person name="Hayashizaki Y."/>
        </authorList>
    </citation>
    <scope>NUCLEOTIDE SEQUENCE [LARGE SCALE MRNA]</scope>
    <source>
        <strain>C57BL/6J</strain>
        <tissue>Embryo</tissue>
    </source>
</reference>
<reference key="2">
    <citation type="journal article" date="2004" name="Genome Res.">
        <title>The status, quality, and expansion of the NIH full-length cDNA project: the Mammalian Gene Collection (MGC).</title>
        <authorList>
            <consortium name="The MGC Project Team"/>
        </authorList>
    </citation>
    <scope>NUCLEOTIDE SEQUENCE [LARGE SCALE MRNA]</scope>
    <source>
        <strain>FVB/N-3</strain>
        <tissue>Mammary tumor</tissue>
    </source>
</reference>
<reference key="3">
    <citation type="journal article" date="2023" name="HGG Adv.">
        <title>A hypomorphic variant in the translocase of the outer mitochondrial membrane complex subunit TOMM7 causes short stature and developmental delay.</title>
        <authorList>
            <person name="Young C."/>
            <person name="Batkovskyte D."/>
            <person name="Kitamura M."/>
            <person name="Shvedova M."/>
            <person name="Mihara Y."/>
            <person name="Akiba J."/>
            <person name="Zhou W."/>
            <person name="Hammarsjoe A."/>
            <person name="Nishimura G."/>
            <person name="Yatsuga S."/>
            <person name="Grigelioniene G."/>
            <person name="Kobayashi T."/>
        </authorList>
    </citation>
    <scope>MUTAGENESIS OF TRP-25</scope>
</reference>
<name>TOM7_MOUSE</name>
<organism>
    <name type="scientific">Mus musculus</name>
    <name type="common">Mouse</name>
    <dbReference type="NCBI Taxonomy" id="10090"/>
    <lineage>
        <taxon>Eukaryota</taxon>
        <taxon>Metazoa</taxon>
        <taxon>Chordata</taxon>
        <taxon>Craniata</taxon>
        <taxon>Vertebrata</taxon>
        <taxon>Euteleostomi</taxon>
        <taxon>Mammalia</taxon>
        <taxon>Eutheria</taxon>
        <taxon>Euarchontoglires</taxon>
        <taxon>Glires</taxon>
        <taxon>Rodentia</taxon>
        <taxon>Myomorpha</taxon>
        <taxon>Muroidea</taxon>
        <taxon>Muridae</taxon>
        <taxon>Murinae</taxon>
        <taxon>Mus</taxon>
        <taxon>Mus</taxon>
    </lineage>
</organism>
<keyword id="KW-0472">Membrane</keyword>
<keyword id="KW-0496">Mitochondrion</keyword>
<keyword id="KW-1000">Mitochondrion outer membrane</keyword>
<keyword id="KW-0653">Protein transport</keyword>
<keyword id="KW-1185">Reference proteome</keyword>
<keyword id="KW-0812">Transmembrane</keyword>
<keyword id="KW-1133">Transmembrane helix</keyword>
<keyword id="KW-0813">Transport</keyword>
<evidence type="ECO:0000250" key="1"/>
<evidence type="ECO:0000250" key="2">
    <source>
        <dbReference type="UniProtKB" id="Q9P0U1"/>
    </source>
</evidence>
<evidence type="ECO:0000255" key="3"/>
<evidence type="ECO:0000269" key="4">
    <source>
    </source>
</evidence>
<evidence type="ECO:0000305" key="5"/>